<accession>Q55D13</accession>
<proteinExistence type="inferred from homology"/>
<organism>
    <name type="scientific">Dictyostelium discoideum</name>
    <name type="common">Social amoeba</name>
    <dbReference type="NCBI Taxonomy" id="44689"/>
    <lineage>
        <taxon>Eukaryota</taxon>
        <taxon>Amoebozoa</taxon>
        <taxon>Evosea</taxon>
        <taxon>Eumycetozoa</taxon>
        <taxon>Dictyostelia</taxon>
        <taxon>Dictyosteliales</taxon>
        <taxon>Dictyosteliaceae</taxon>
        <taxon>Dictyostelium</taxon>
    </lineage>
</organism>
<name>U512F_DICDI</name>
<gene>
    <name type="ORF">DDB_G0269820</name>
</gene>
<sequence>MAIFKSISSISNSTGSMGSSISASNLDGIDSNNNSIACFDGGCGGSGLGGWSGFNGLDGIGGFNGGCSGGSNTNIINLDIDIGRRRHRRCC</sequence>
<dbReference type="EMBL" id="AAFI02000005">
    <property type="protein sequence ID" value="EAL72260.1"/>
    <property type="molecule type" value="Genomic_DNA"/>
</dbReference>
<dbReference type="RefSeq" id="XP_646318.1">
    <property type="nucleotide sequence ID" value="XM_641226.1"/>
</dbReference>
<dbReference type="PaxDb" id="44689-DDB0266573"/>
<dbReference type="EnsemblProtists" id="EAL72260">
    <property type="protein sequence ID" value="EAL72260"/>
    <property type="gene ID" value="DDB_G0269820"/>
</dbReference>
<dbReference type="GeneID" id="8617273"/>
<dbReference type="KEGG" id="ddi:DDB_G0269820"/>
<dbReference type="dictyBase" id="DDB_G0269820"/>
<dbReference type="HOGENOM" id="CLU_194865_0_0_1"/>
<dbReference type="InParanoid" id="Q55D13"/>
<dbReference type="PRO" id="PR:Q55D13"/>
<dbReference type="Proteomes" id="UP000002195">
    <property type="component" value="Chromosome 1"/>
</dbReference>
<dbReference type="InterPro" id="IPR008455">
    <property type="entry name" value="HssA/B-related"/>
</dbReference>
<dbReference type="Pfam" id="PF05710">
    <property type="entry name" value="Coiled"/>
    <property type="match status" value="1"/>
</dbReference>
<keyword id="KW-1185">Reference proteome</keyword>
<protein>
    <recommendedName>
        <fullName>UPF0512 protein F</fullName>
    </recommendedName>
</protein>
<comment type="similarity">
    <text evidence="1">Belongs to the UPF0512 family.</text>
</comment>
<evidence type="ECO:0000305" key="1"/>
<feature type="chain" id="PRO_0000317344" description="UPF0512 protein F">
    <location>
        <begin position="1"/>
        <end position="91"/>
    </location>
</feature>
<reference key="1">
    <citation type="journal article" date="2005" name="Nature">
        <title>The genome of the social amoeba Dictyostelium discoideum.</title>
        <authorList>
            <person name="Eichinger L."/>
            <person name="Pachebat J.A."/>
            <person name="Gloeckner G."/>
            <person name="Rajandream M.A."/>
            <person name="Sucgang R."/>
            <person name="Berriman M."/>
            <person name="Song J."/>
            <person name="Olsen R."/>
            <person name="Szafranski K."/>
            <person name="Xu Q."/>
            <person name="Tunggal B."/>
            <person name="Kummerfeld S."/>
            <person name="Madera M."/>
            <person name="Konfortov B.A."/>
            <person name="Rivero F."/>
            <person name="Bankier A.T."/>
            <person name="Lehmann R."/>
            <person name="Hamlin N."/>
            <person name="Davies R."/>
            <person name="Gaudet P."/>
            <person name="Fey P."/>
            <person name="Pilcher K."/>
            <person name="Chen G."/>
            <person name="Saunders D."/>
            <person name="Sodergren E.J."/>
            <person name="Davis P."/>
            <person name="Kerhornou A."/>
            <person name="Nie X."/>
            <person name="Hall N."/>
            <person name="Anjard C."/>
            <person name="Hemphill L."/>
            <person name="Bason N."/>
            <person name="Farbrother P."/>
            <person name="Desany B."/>
            <person name="Just E."/>
            <person name="Morio T."/>
            <person name="Rost R."/>
            <person name="Churcher C.M."/>
            <person name="Cooper J."/>
            <person name="Haydock S."/>
            <person name="van Driessche N."/>
            <person name="Cronin A."/>
            <person name="Goodhead I."/>
            <person name="Muzny D.M."/>
            <person name="Mourier T."/>
            <person name="Pain A."/>
            <person name="Lu M."/>
            <person name="Harper D."/>
            <person name="Lindsay R."/>
            <person name="Hauser H."/>
            <person name="James K.D."/>
            <person name="Quiles M."/>
            <person name="Madan Babu M."/>
            <person name="Saito T."/>
            <person name="Buchrieser C."/>
            <person name="Wardroper A."/>
            <person name="Felder M."/>
            <person name="Thangavelu M."/>
            <person name="Johnson D."/>
            <person name="Knights A."/>
            <person name="Loulseged H."/>
            <person name="Mungall K.L."/>
            <person name="Oliver K."/>
            <person name="Price C."/>
            <person name="Quail M.A."/>
            <person name="Urushihara H."/>
            <person name="Hernandez J."/>
            <person name="Rabbinowitsch E."/>
            <person name="Steffen D."/>
            <person name="Sanders M."/>
            <person name="Ma J."/>
            <person name="Kohara Y."/>
            <person name="Sharp S."/>
            <person name="Simmonds M.N."/>
            <person name="Spiegler S."/>
            <person name="Tivey A."/>
            <person name="Sugano S."/>
            <person name="White B."/>
            <person name="Walker D."/>
            <person name="Woodward J.R."/>
            <person name="Winckler T."/>
            <person name="Tanaka Y."/>
            <person name="Shaulsky G."/>
            <person name="Schleicher M."/>
            <person name="Weinstock G.M."/>
            <person name="Rosenthal A."/>
            <person name="Cox E.C."/>
            <person name="Chisholm R.L."/>
            <person name="Gibbs R.A."/>
            <person name="Loomis W.F."/>
            <person name="Platzer M."/>
            <person name="Kay R.R."/>
            <person name="Williams J.G."/>
            <person name="Dear P.H."/>
            <person name="Noegel A.A."/>
            <person name="Barrell B.G."/>
            <person name="Kuspa A."/>
        </authorList>
    </citation>
    <scope>NUCLEOTIDE SEQUENCE [LARGE SCALE GENOMIC DNA]</scope>
    <source>
        <strain>AX4</strain>
    </source>
</reference>